<keyword id="KW-0067">ATP-binding</keyword>
<keyword id="KW-0131">Cell cycle</keyword>
<keyword id="KW-0132">Cell division</keyword>
<keyword id="KW-0133">Cell shape</keyword>
<keyword id="KW-0961">Cell wall biogenesis/degradation</keyword>
<keyword id="KW-0963">Cytoplasm</keyword>
<keyword id="KW-0436">Ligase</keyword>
<keyword id="KW-0547">Nucleotide-binding</keyword>
<keyword id="KW-0573">Peptidoglycan synthesis</keyword>
<keyword id="KW-1185">Reference proteome</keyword>
<reference key="1">
    <citation type="journal article" date="1998" name="Nature">
        <title>Deciphering the biology of Mycobacterium tuberculosis from the complete genome sequence.</title>
        <authorList>
            <person name="Cole S.T."/>
            <person name="Brosch R."/>
            <person name="Parkhill J."/>
            <person name="Garnier T."/>
            <person name="Churcher C.M."/>
            <person name="Harris D.E."/>
            <person name="Gordon S.V."/>
            <person name="Eiglmeier K."/>
            <person name="Gas S."/>
            <person name="Barry C.E. III"/>
            <person name="Tekaia F."/>
            <person name="Badcock K."/>
            <person name="Basham D."/>
            <person name="Brown D."/>
            <person name="Chillingworth T."/>
            <person name="Connor R."/>
            <person name="Davies R.M."/>
            <person name="Devlin K."/>
            <person name="Feltwell T."/>
            <person name="Gentles S."/>
            <person name="Hamlin N."/>
            <person name="Holroyd S."/>
            <person name="Hornsby T."/>
            <person name="Jagels K."/>
            <person name="Krogh A."/>
            <person name="McLean J."/>
            <person name="Moule S."/>
            <person name="Murphy L.D."/>
            <person name="Oliver S."/>
            <person name="Osborne J."/>
            <person name="Quail M.A."/>
            <person name="Rajandream M.A."/>
            <person name="Rogers J."/>
            <person name="Rutter S."/>
            <person name="Seeger K."/>
            <person name="Skelton S."/>
            <person name="Squares S."/>
            <person name="Squares R."/>
            <person name="Sulston J.E."/>
            <person name="Taylor K."/>
            <person name="Whitehead S."/>
            <person name="Barrell B.G."/>
        </authorList>
    </citation>
    <scope>NUCLEOTIDE SEQUENCE [LARGE SCALE GENOMIC DNA]</scope>
    <source>
        <strain>ATCC 25618 / H37Rv</strain>
    </source>
</reference>
<reference key="2">
    <citation type="journal article" date="2008" name="BMC Syst. Biol.">
        <title>targetTB: a target identification pipeline for Mycobacterium tuberculosis through an interactome, reactome and genome-scale structural analysis.</title>
        <authorList>
            <person name="Raman K."/>
            <person name="Yeturu K."/>
            <person name="Chandra N."/>
        </authorList>
    </citation>
    <scope>IDENTIFICATION AS A DRUG TARGET [LARGE SCALE ANALYSIS]</scope>
</reference>
<reference key="3">
    <citation type="journal article" date="2011" name="Mol. Cell. Proteomics">
        <title>Proteogenomic analysis of Mycobacterium tuberculosis by high resolution mass spectrometry.</title>
        <authorList>
            <person name="Kelkar D.S."/>
            <person name="Kumar D."/>
            <person name="Kumar P."/>
            <person name="Balakrishnan L."/>
            <person name="Muthusamy B."/>
            <person name="Yadav A.K."/>
            <person name="Shrivastava P."/>
            <person name="Marimuthu A."/>
            <person name="Anand S."/>
            <person name="Sundaram H."/>
            <person name="Kingsbury R."/>
            <person name="Harsha H.C."/>
            <person name="Nair B."/>
            <person name="Prasad T.S."/>
            <person name="Chauhan D.S."/>
            <person name="Katoch K."/>
            <person name="Katoch V.M."/>
            <person name="Kumar P."/>
            <person name="Chaerkady R."/>
            <person name="Ramachandran S."/>
            <person name="Dash D."/>
            <person name="Pandey A."/>
        </authorList>
    </citation>
    <scope>IDENTIFICATION BY MASS SPECTROMETRY [LARGE SCALE ANALYSIS]</scope>
    <source>
        <strain>ATCC 25618 / H37Rv</strain>
    </source>
</reference>
<protein>
    <recommendedName>
        <fullName evidence="1">UDP-N-acetylmuramoyl-tripeptide--D-alanyl-D-alanine ligase</fullName>
        <ecNumber evidence="1">6.3.2.10</ecNumber>
    </recommendedName>
    <alternativeName>
        <fullName evidence="1">D-alanyl-D-alanine-adding enzyme</fullName>
    </alternativeName>
    <alternativeName>
        <fullName>UDP-MurNAc-pentapeptide synthetase</fullName>
    </alternativeName>
</protein>
<gene>
    <name evidence="1" type="primary">murF</name>
    <name type="ordered locus">Rv2157c</name>
    <name type="ORF">MTCY270.11</name>
</gene>
<dbReference type="EC" id="6.3.2.10" evidence="1"/>
<dbReference type="EMBL" id="AL123456">
    <property type="protein sequence ID" value="CCP44933.1"/>
    <property type="molecule type" value="Genomic_DNA"/>
</dbReference>
<dbReference type="PIR" id="A70580">
    <property type="entry name" value="A70580"/>
</dbReference>
<dbReference type="RefSeq" id="NP_216673.1">
    <property type="nucleotide sequence ID" value="NC_000962.3"/>
</dbReference>
<dbReference type="RefSeq" id="WP_003411187.1">
    <property type="nucleotide sequence ID" value="NZ_NVQJ01000044.1"/>
</dbReference>
<dbReference type="SMR" id="P9WJL1"/>
<dbReference type="FunCoup" id="P9WJL1">
    <property type="interactions" value="35"/>
</dbReference>
<dbReference type="STRING" id="83332.Rv2157c"/>
<dbReference type="PaxDb" id="83332-Rv2157c"/>
<dbReference type="DNASU" id="887826"/>
<dbReference type="GeneID" id="887826"/>
<dbReference type="KEGG" id="mtu:Rv2157c"/>
<dbReference type="KEGG" id="mtv:RVBD_2157c"/>
<dbReference type="TubercuList" id="Rv2157c"/>
<dbReference type="eggNOG" id="COG0770">
    <property type="taxonomic scope" value="Bacteria"/>
</dbReference>
<dbReference type="InParanoid" id="P9WJL1"/>
<dbReference type="OrthoDB" id="9800958at2"/>
<dbReference type="PhylomeDB" id="P9WJL1"/>
<dbReference type="BioCyc" id="MetaCyc:G185E-6365-MONOMER"/>
<dbReference type="SABIO-RK" id="P9WJL1"/>
<dbReference type="UniPathway" id="UPA00219"/>
<dbReference type="Proteomes" id="UP000001584">
    <property type="component" value="Chromosome"/>
</dbReference>
<dbReference type="GO" id="GO:0005737">
    <property type="term" value="C:cytoplasm"/>
    <property type="evidence" value="ECO:0007669"/>
    <property type="project" value="UniProtKB-SubCell"/>
</dbReference>
<dbReference type="GO" id="GO:0005524">
    <property type="term" value="F:ATP binding"/>
    <property type="evidence" value="ECO:0007669"/>
    <property type="project" value="UniProtKB-UniRule"/>
</dbReference>
<dbReference type="GO" id="GO:0047480">
    <property type="term" value="F:UDP-N-acetylmuramoyl-tripeptide-D-alanyl-D-alanine ligase activity"/>
    <property type="evidence" value="ECO:0007669"/>
    <property type="project" value="UniProtKB-UniRule"/>
</dbReference>
<dbReference type="GO" id="GO:0008766">
    <property type="term" value="F:UDP-N-acetylmuramoylalanyl-D-glutamyl-2,6-diaminopimelate-D-alanyl-D-alanine ligase activity"/>
    <property type="evidence" value="ECO:0007669"/>
    <property type="project" value="RHEA"/>
</dbReference>
<dbReference type="GO" id="GO:0051301">
    <property type="term" value="P:cell division"/>
    <property type="evidence" value="ECO:0007669"/>
    <property type="project" value="UniProtKB-KW"/>
</dbReference>
<dbReference type="GO" id="GO:0071555">
    <property type="term" value="P:cell wall organization"/>
    <property type="evidence" value="ECO:0007669"/>
    <property type="project" value="UniProtKB-KW"/>
</dbReference>
<dbReference type="GO" id="GO:0009252">
    <property type="term" value="P:peptidoglycan biosynthetic process"/>
    <property type="evidence" value="ECO:0007669"/>
    <property type="project" value="UniProtKB-UniRule"/>
</dbReference>
<dbReference type="GO" id="GO:0008360">
    <property type="term" value="P:regulation of cell shape"/>
    <property type="evidence" value="ECO:0007669"/>
    <property type="project" value="UniProtKB-KW"/>
</dbReference>
<dbReference type="Gene3D" id="3.90.190.20">
    <property type="entry name" value="Mur ligase, C-terminal domain"/>
    <property type="match status" value="1"/>
</dbReference>
<dbReference type="Gene3D" id="3.40.1190.10">
    <property type="entry name" value="Mur-like, catalytic domain"/>
    <property type="match status" value="1"/>
</dbReference>
<dbReference type="Gene3D" id="3.40.1390.10">
    <property type="entry name" value="MurE/MurF, N-terminal domain"/>
    <property type="match status" value="1"/>
</dbReference>
<dbReference type="HAMAP" id="MF_02019">
    <property type="entry name" value="MurF"/>
    <property type="match status" value="1"/>
</dbReference>
<dbReference type="InterPro" id="IPR036565">
    <property type="entry name" value="Mur-like_cat_sf"/>
</dbReference>
<dbReference type="InterPro" id="IPR004101">
    <property type="entry name" value="Mur_ligase_C"/>
</dbReference>
<dbReference type="InterPro" id="IPR036615">
    <property type="entry name" value="Mur_ligase_C_dom_sf"/>
</dbReference>
<dbReference type="InterPro" id="IPR013221">
    <property type="entry name" value="Mur_ligase_cen"/>
</dbReference>
<dbReference type="InterPro" id="IPR000713">
    <property type="entry name" value="Mur_ligase_N"/>
</dbReference>
<dbReference type="InterPro" id="IPR051046">
    <property type="entry name" value="MurCDEF_CellWall_CoF430Synth"/>
</dbReference>
<dbReference type="InterPro" id="IPR035911">
    <property type="entry name" value="MurE/MurF_N"/>
</dbReference>
<dbReference type="InterPro" id="IPR005863">
    <property type="entry name" value="UDP-N-AcMur_synth"/>
</dbReference>
<dbReference type="NCBIfam" id="TIGR01143">
    <property type="entry name" value="murF"/>
    <property type="match status" value="1"/>
</dbReference>
<dbReference type="PANTHER" id="PTHR43024">
    <property type="entry name" value="UDP-N-ACETYLMURAMOYL-TRIPEPTIDE--D-ALANYL-D-ALANINE LIGASE"/>
    <property type="match status" value="1"/>
</dbReference>
<dbReference type="PANTHER" id="PTHR43024:SF1">
    <property type="entry name" value="UDP-N-ACETYLMURAMOYL-TRIPEPTIDE--D-ALANYL-D-ALANINE LIGASE"/>
    <property type="match status" value="1"/>
</dbReference>
<dbReference type="Pfam" id="PF01225">
    <property type="entry name" value="Mur_ligase"/>
    <property type="match status" value="1"/>
</dbReference>
<dbReference type="Pfam" id="PF02875">
    <property type="entry name" value="Mur_ligase_C"/>
    <property type="match status" value="1"/>
</dbReference>
<dbReference type="Pfam" id="PF08245">
    <property type="entry name" value="Mur_ligase_M"/>
    <property type="match status" value="1"/>
</dbReference>
<dbReference type="SUPFAM" id="SSF53623">
    <property type="entry name" value="MurD-like peptide ligases, catalytic domain"/>
    <property type="match status" value="1"/>
</dbReference>
<dbReference type="SUPFAM" id="SSF53244">
    <property type="entry name" value="MurD-like peptide ligases, peptide-binding domain"/>
    <property type="match status" value="1"/>
</dbReference>
<dbReference type="SUPFAM" id="SSF63418">
    <property type="entry name" value="MurE/MurF N-terminal domain"/>
    <property type="match status" value="1"/>
</dbReference>
<proteinExistence type="evidence at protein level"/>
<evidence type="ECO:0000255" key="1">
    <source>
        <dbReference type="HAMAP-Rule" id="MF_02019"/>
    </source>
</evidence>
<organism>
    <name type="scientific">Mycobacterium tuberculosis (strain ATCC 25618 / H37Rv)</name>
    <dbReference type="NCBI Taxonomy" id="83332"/>
    <lineage>
        <taxon>Bacteria</taxon>
        <taxon>Bacillati</taxon>
        <taxon>Actinomycetota</taxon>
        <taxon>Actinomycetes</taxon>
        <taxon>Mycobacteriales</taxon>
        <taxon>Mycobacteriaceae</taxon>
        <taxon>Mycobacterium</taxon>
        <taxon>Mycobacterium tuberculosis complex</taxon>
    </lineage>
</organism>
<feature type="chain" id="PRO_0000101701" description="UDP-N-acetylmuramoyl-tripeptide--D-alanyl-D-alanine ligase">
    <location>
        <begin position="1"/>
        <end position="510"/>
    </location>
</feature>
<feature type="binding site" evidence="1">
    <location>
        <begin position="136"/>
        <end position="142"/>
    </location>
    <ligand>
        <name>ATP</name>
        <dbReference type="ChEBI" id="CHEBI:30616"/>
    </ligand>
</feature>
<name>MURF_MYCTU</name>
<sequence length="510" mass="51633">MIELTVAQIAEIVGGAVADISPQDAAHRRVTGTVEFDSRAIGPGGLFLALPGARADGHDHAASAVAAGAAVVLAARPVGVPAIVVPPVAAPNVLAGVLEHDNDGSGAAVLAALAKLATAVAAQLVAGGLTIIGITGSSGKTSTKDLMAAVLAPLGEVVAPPGSFNNELGHPWTVLRATRRTDYLILEMAARHHGNIAALAEIAPPSIGVVLNVGTAHLGEFGSREVIAQTKAELPQAVPHSGAVVLNADDPAVAAMAKLTAARVVRVSRDNTGDVWAGPVSLDELARPRFTLHAHDAQAEVRLGVCGDHQVTNALCAAAVALECGASVEQVAAALTAAPPVSRHRMQVTTRGDGVTVIDDAYNANPDSMRAGLQALAWIAHQPEATRRSWAVLGEMAELGEDAIAEHDRIGRLAVRLDVSRLVVVGTGRSISAMHHGAVLEGAWGSGEATADHGADRTAVNVADGDAALALLRAELRPGDVVLVKASNAAGLGAVADALVADDTCGSVRP</sequence>
<accession>P9WJL1</accession>
<accession>L0TAC8</accession>
<accession>O06220</accession>
<accession>P0A5L4</accession>
<comment type="function">
    <text evidence="1">Involved in cell wall formation. Catalyzes the final step in the synthesis of UDP-N-acetylmuramoyl-pentapeptide, the precursor of murein.</text>
</comment>
<comment type="catalytic activity">
    <reaction evidence="1">
        <text>D-alanyl-D-alanine + UDP-N-acetyl-alpha-D-muramoyl-L-alanyl-gamma-D-glutamyl-meso-2,6-diaminopimelate + ATP = UDP-N-acetyl-alpha-D-muramoyl-L-alanyl-gamma-D-glutamyl-meso-2,6-diaminopimeloyl-D-alanyl-D-alanine + ADP + phosphate + H(+)</text>
        <dbReference type="Rhea" id="RHEA:28374"/>
        <dbReference type="ChEBI" id="CHEBI:15378"/>
        <dbReference type="ChEBI" id="CHEBI:30616"/>
        <dbReference type="ChEBI" id="CHEBI:43474"/>
        <dbReference type="ChEBI" id="CHEBI:57822"/>
        <dbReference type="ChEBI" id="CHEBI:61386"/>
        <dbReference type="ChEBI" id="CHEBI:83905"/>
        <dbReference type="ChEBI" id="CHEBI:456216"/>
        <dbReference type="EC" id="6.3.2.10"/>
    </reaction>
</comment>
<comment type="pathway">
    <text evidence="1">Cell wall biogenesis; peptidoglycan biosynthesis.</text>
</comment>
<comment type="subcellular location">
    <subcellularLocation>
        <location evidence="1">Cytoplasm</location>
    </subcellularLocation>
</comment>
<comment type="miscellaneous">
    <text>Was identified as a high-confidence drug target.</text>
</comment>
<comment type="similarity">
    <text evidence="1">Belongs to the MurCDEF family. MurF subfamily.</text>
</comment>